<reference key="1">
    <citation type="journal article" date="1997" name="Nature">
        <title>The complete genome sequence of the hyperthermophilic, sulphate-reducing archaeon Archaeoglobus fulgidus.</title>
        <authorList>
            <person name="Klenk H.-P."/>
            <person name="Clayton R.A."/>
            <person name="Tomb J.-F."/>
            <person name="White O."/>
            <person name="Nelson K.E."/>
            <person name="Ketchum K.A."/>
            <person name="Dodson R.J."/>
            <person name="Gwinn M.L."/>
            <person name="Hickey E.K."/>
            <person name="Peterson J.D."/>
            <person name="Richardson D.L."/>
            <person name="Kerlavage A.R."/>
            <person name="Graham D.E."/>
            <person name="Kyrpides N.C."/>
            <person name="Fleischmann R.D."/>
            <person name="Quackenbush J."/>
            <person name="Lee N.H."/>
            <person name="Sutton G.G."/>
            <person name="Gill S.R."/>
            <person name="Kirkness E.F."/>
            <person name="Dougherty B.A."/>
            <person name="McKenney K."/>
            <person name="Adams M.D."/>
            <person name="Loftus B.J."/>
            <person name="Peterson S.N."/>
            <person name="Reich C.I."/>
            <person name="McNeil L.K."/>
            <person name="Badger J.H."/>
            <person name="Glodek A."/>
            <person name="Zhou L."/>
            <person name="Overbeek R."/>
            <person name="Gocayne J.D."/>
            <person name="Weidman J.F."/>
            <person name="McDonald L.A."/>
            <person name="Utterback T.R."/>
            <person name="Cotton M.D."/>
            <person name="Spriggs T."/>
            <person name="Artiach P."/>
            <person name="Kaine B.P."/>
            <person name="Sykes S.M."/>
            <person name="Sadow P.W."/>
            <person name="D'Andrea K.P."/>
            <person name="Bowman C."/>
            <person name="Fujii C."/>
            <person name="Garland S.A."/>
            <person name="Mason T.M."/>
            <person name="Olsen G.J."/>
            <person name="Fraser C.M."/>
            <person name="Smith H.O."/>
            <person name="Woese C.R."/>
            <person name="Venter J.C."/>
        </authorList>
    </citation>
    <scope>NUCLEOTIDE SEQUENCE [LARGE SCALE GENOMIC DNA]</scope>
    <source>
        <strain>ATCC 49558 / DSM 4304 / JCM 9628 / NBRC 100126 / VC-16</strain>
    </source>
</reference>
<evidence type="ECO:0000255" key="1"/>
<evidence type="ECO:0000305" key="2"/>
<name>Y2111_ARCFU</name>
<dbReference type="EMBL" id="AE000782">
    <property type="protein sequence ID" value="AAB89138.1"/>
    <property type="molecule type" value="Genomic_DNA"/>
</dbReference>
<dbReference type="PIR" id="G69513">
    <property type="entry name" value="G69513"/>
</dbReference>
<dbReference type="RefSeq" id="WP_010879602.1">
    <property type="nucleotide sequence ID" value="NC_000917.1"/>
</dbReference>
<dbReference type="STRING" id="224325.AF_2111"/>
<dbReference type="PaxDb" id="224325-AF_2111"/>
<dbReference type="EnsemblBacteria" id="AAB89138">
    <property type="protein sequence ID" value="AAB89138"/>
    <property type="gene ID" value="AF_2111"/>
</dbReference>
<dbReference type="KEGG" id="afu:AF_2111"/>
<dbReference type="eggNOG" id="arCOG01997">
    <property type="taxonomic scope" value="Archaea"/>
</dbReference>
<dbReference type="HOGENOM" id="CLU_079909_0_0_2"/>
<dbReference type="OrthoDB" id="10856at2157"/>
<dbReference type="PhylomeDB" id="O28169"/>
<dbReference type="Proteomes" id="UP000002199">
    <property type="component" value="Chromosome"/>
</dbReference>
<dbReference type="GO" id="GO:0005886">
    <property type="term" value="C:plasma membrane"/>
    <property type="evidence" value="ECO:0007669"/>
    <property type="project" value="UniProtKB-SubCell"/>
</dbReference>
<dbReference type="InterPro" id="IPR002771">
    <property type="entry name" value="Multi_antbiot-R_MarC"/>
</dbReference>
<dbReference type="NCBIfam" id="TIGR00427">
    <property type="entry name" value="NAAT family transporter"/>
    <property type="match status" value="1"/>
</dbReference>
<dbReference type="PANTHER" id="PTHR33508">
    <property type="entry name" value="UPF0056 MEMBRANE PROTEIN YHCE"/>
    <property type="match status" value="1"/>
</dbReference>
<dbReference type="PANTHER" id="PTHR33508:SF1">
    <property type="entry name" value="UPF0056 MEMBRANE PROTEIN YHCE"/>
    <property type="match status" value="1"/>
</dbReference>
<dbReference type="Pfam" id="PF01914">
    <property type="entry name" value="MarC"/>
    <property type="match status" value="1"/>
</dbReference>
<accession>O28169</accession>
<protein>
    <recommendedName>
        <fullName>UPF0056 membrane protein AF_2111</fullName>
    </recommendedName>
</protein>
<proteinExistence type="inferred from homology"/>
<sequence>MDIAGYLSFFFASFTTLFIIIDPPGNLPIFIALTERFSDEYREKISKRATIIAFLILFITMVTGGKILDYFGVSISSLKIAGGILLFISSVDILLGGTRREAYKRRAEESIDVDSIAVFPLALPLYTGPGAITAGIVLYSQAGDVVMKLLVVLSAALVYSIVRLSHIYSAPIIRLLGRSGADIAARILAIFLAAIAVEFVFDGLAEKLVSMDL</sequence>
<gene>
    <name type="ordered locus">AF_2111</name>
</gene>
<feature type="chain" id="PRO_0000156916" description="UPF0056 membrane protein AF_2111">
    <location>
        <begin position="1"/>
        <end position="213"/>
    </location>
</feature>
<feature type="transmembrane region" description="Helical" evidence="1">
    <location>
        <begin position="1"/>
        <end position="21"/>
    </location>
</feature>
<feature type="transmembrane region" description="Helical" evidence="1">
    <location>
        <begin position="51"/>
        <end position="71"/>
    </location>
</feature>
<feature type="transmembrane region" description="Helical" evidence="1">
    <location>
        <begin position="75"/>
        <end position="95"/>
    </location>
</feature>
<feature type="transmembrane region" description="Helical" evidence="1">
    <location>
        <begin position="118"/>
        <end position="138"/>
    </location>
</feature>
<feature type="transmembrane region" description="Helical" evidence="1">
    <location>
        <begin position="142"/>
        <end position="162"/>
    </location>
</feature>
<feature type="transmembrane region" description="Helical" evidence="1">
    <location>
        <begin position="181"/>
        <end position="201"/>
    </location>
</feature>
<keyword id="KW-1003">Cell membrane</keyword>
<keyword id="KW-0472">Membrane</keyword>
<keyword id="KW-1185">Reference proteome</keyword>
<keyword id="KW-0812">Transmembrane</keyword>
<keyword id="KW-1133">Transmembrane helix</keyword>
<comment type="subcellular location">
    <subcellularLocation>
        <location evidence="2">Cell membrane</location>
        <topology evidence="2">Multi-pass membrane protein</topology>
    </subcellularLocation>
</comment>
<comment type="similarity">
    <text evidence="2">Belongs to the UPF0056 (MarC) family.</text>
</comment>
<organism>
    <name type="scientific">Archaeoglobus fulgidus (strain ATCC 49558 / DSM 4304 / JCM 9628 / NBRC 100126 / VC-16)</name>
    <dbReference type="NCBI Taxonomy" id="224325"/>
    <lineage>
        <taxon>Archaea</taxon>
        <taxon>Methanobacteriati</taxon>
        <taxon>Methanobacteriota</taxon>
        <taxon>Archaeoglobi</taxon>
        <taxon>Archaeoglobales</taxon>
        <taxon>Archaeoglobaceae</taxon>
        <taxon>Archaeoglobus</taxon>
    </lineage>
</organism>